<name>GP6R_CHLMU</name>
<organism>
    <name type="scientific">Chlamydia muridarum (strain MoPn / Nigg)</name>
    <dbReference type="NCBI Taxonomy" id="243161"/>
    <lineage>
        <taxon>Bacteria</taxon>
        <taxon>Pseudomonadati</taxon>
        <taxon>Chlamydiota</taxon>
        <taxon>Chlamydiia</taxon>
        <taxon>Chlamydiales</taxon>
        <taxon>Chlamydiaceae</taxon>
        <taxon>Chlamydia/Chlamydophila group</taxon>
        <taxon>Chlamydia</taxon>
    </lineage>
</organism>
<proteinExistence type="inferred from homology"/>
<sequence>MGNIKTLLENRFKKPTSDKMESLAKKRLEGELSPFLNGFTNPKLSSQEEAKFRQLLEEYSFSNEISKHDLQQLCHLSAQVKQIHHQAVLLHGERIKKVRELLTSYREGAFSAWLLLTYGNRQTPYNFLVYYELFSTLPDSLKLELEKLPRQAVYTLAAREGTQEKKEAIIRNYQGETKGELLEIIRKEFPLLPTDRRHTPLSQKAFTLLAKGTKLLRQCTDVSHEELIALEKLIKKLQKVTTNLLSNTKVSRNDNEIQNSRN</sequence>
<feature type="chain" id="PRO_0000220777" description="Virulence plasmid protein pGP6-D-related protein">
    <location>
        <begin position="1"/>
        <end position="262"/>
    </location>
</feature>
<protein>
    <recommendedName>
        <fullName>Virulence plasmid protein pGP6-D-related protein</fullName>
    </recommendedName>
</protein>
<gene>
    <name type="ordered locus">TC_0872</name>
</gene>
<reference key="1">
    <citation type="journal article" date="2000" name="Nucleic Acids Res.">
        <title>Genome sequences of Chlamydia trachomatis MoPn and Chlamydia pneumoniae AR39.</title>
        <authorList>
            <person name="Read T.D."/>
            <person name="Brunham R.C."/>
            <person name="Shen C."/>
            <person name="Gill S.R."/>
            <person name="Heidelberg J.F."/>
            <person name="White O."/>
            <person name="Hickey E.K."/>
            <person name="Peterson J.D."/>
            <person name="Utterback T.R."/>
            <person name="Berry K.J."/>
            <person name="Bass S."/>
            <person name="Linher K.D."/>
            <person name="Weidman J.F."/>
            <person name="Khouri H.M."/>
            <person name="Craven B."/>
            <person name="Bowman C."/>
            <person name="Dodson R.J."/>
            <person name="Gwinn M.L."/>
            <person name="Nelson W.C."/>
            <person name="DeBoy R.T."/>
            <person name="Kolonay J.F."/>
            <person name="McClarty G."/>
            <person name="Salzberg S.L."/>
            <person name="Eisen J.A."/>
            <person name="Fraser C.M."/>
        </authorList>
    </citation>
    <scope>NUCLEOTIDE SEQUENCE [LARGE SCALE GENOMIC DNA]</scope>
    <source>
        <strain>MoPn / Nigg</strain>
    </source>
</reference>
<comment type="similarity">
    <text evidence="1">Belongs to the UPF0137 (pGP6-D) family.</text>
</comment>
<accession>Q9PJF7</accession>
<dbReference type="EMBL" id="AE002160">
    <property type="protein sequence ID" value="AAF39668.1"/>
    <property type="molecule type" value="Genomic_DNA"/>
</dbReference>
<dbReference type="PIR" id="C81656">
    <property type="entry name" value="C81656"/>
</dbReference>
<dbReference type="RefSeq" id="WP_010231808.1">
    <property type="nucleotide sequence ID" value="NZ_CP063055.1"/>
</dbReference>
<dbReference type="SMR" id="Q9PJF7"/>
<dbReference type="GeneID" id="1246240"/>
<dbReference type="KEGG" id="cmu:TC_0872"/>
<dbReference type="eggNOG" id="ENOG502ZBXP">
    <property type="taxonomic scope" value="Bacteria"/>
</dbReference>
<dbReference type="HOGENOM" id="CLU_1109868_0_0_0"/>
<dbReference type="OrthoDB" id="20802at2"/>
<dbReference type="Proteomes" id="UP000000800">
    <property type="component" value="Chromosome"/>
</dbReference>
<dbReference type="InterPro" id="IPR005350">
    <property type="entry name" value="UPF0137"/>
</dbReference>
<dbReference type="Pfam" id="PF03677">
    <property type="entry name" value="UPF0137"/>
    <property type="match status" value="1"/>
</dbReference>
<evidence type="ECO:0000305" key="1"/>